<sequence length="257" mass="27902">MLSRRIIPCLDVRDGRVVKGVKFRDHVDMGDIVELALRYRDHGADELVFYDIGASPQGRSVDYRWVERVARLIDIPFCVAGGIGEVETARAVLHAGADKISINSPALRQPALISALAEAFGVQCVVVGIDSIREADGQWRVRCNTGDPDKTQALPLRTLDWIVEAQRLGAGEIVLNCMDSDGVRCGYDIAQLSQARALCQVPLVASGGAGDMQHFADVFHKADVDGALAASVFHSGAISIPGLKQFLREQQIEVRDV</sequence>
<proteinExistence type="inferred from homology"/>
<reference key="1">
    <citation type="journal article" date="2003" name="J. Bacteriol.">
        <title>Comparative analyses of the complete genome sequences of Pierce's disease and citrus variegated chlorosis strains of Xylella fastidiosa.</title>
        <authorList>
            <person name="Van Sluys M.A."/>
            <person name="de Oliveira M.C."/>
            <person name="Monteiro-Vitorello C.B."/>
            <person name="Miyaki C.Y."/>
            <person name="Furlan L.R."/>
            <person name="Camargo L.E.A."/>
            <person name="da Silva A.C.R."/>
            <person name="Moon D.H."/>
            <person name="Takita M.A."/>
            <person name="Lemos E.G.M."/>
            <person name="Machado M.A."/>
            <person name="Ferro M.I.T."/>
            <person name="da Silva F.R."/>
            <person name="Goldman M.H.S."/>
            <person name="Goldman G.H."/>
            <person name="Lemos M.V.F."/>
            <person name="El-Dorry H."/>
            <person name="Tsai S.M."/>
            <person name="Carrer H."/>
            <person name="Carraro D.M."/>
            <person name="de Oliveira R.C."/>
            <person name="Nunes L.R."/>
            <person name="Siqueira W.J."/>
            <person name="Coutinho L.L."/>
            <person name="Kimura E.T."/>
            <person name="Ferro E.S."/>
            <person name="Harakava R."/>
            <person name="Kuramae E.E."/>
            <person name="Marino C.L."/>
            <person name="Giglioti E."/>
            <person name="Abreu I.L."/>
            <person name="Alves L.M.C."/>
            <person name="do Amaral A.M."/>
            <person name="Baia G.S."/>
            <person name="Blanco S.R."/>
            <person name="Brito M.S."/>
            <person name="Cannavan F.S."/>
            <person name="Celestino A.V."/>
            <person name="da Cunha A.F."/>
            <person name="Fenille R.C."/>
            <person name="Ferro J.A."/>
            <person name="Formighieri E.F."/>
            <person name="Kishi L.T."/>
            <person name="Leoni S.G."/>
            <person name="Oliveira A.R."/>
            <person name="Rosa V.E. Jr."/>
            <person name="Sassaki F.T."/>
            <person name="Sena J.A.D."/>
            <person name="de Souza A.A."/>
            <person name="Truffi D."/>
            <person name="Tsukumo F."/>
            <person name="Yanai G.M."/>
            <person name="Zaros L.G."/>
            <person name="Civerolo E.L."/>
            <person name="Simpson A.J.G."/>
            <person name="Almeida N.F. Jr."/>
            <person name="Setubal J.C."/>
            <person name="Kitajima J.P."/>
        </authorList>
    </citation>
    <scope>NUCLEOTIDE SEQUENCE [LARGE SCALE GENOMIC DNA]</scope>
    <source>
        <strain>Temecula1 / ATCC 700964</strain>
    </source>
</reference>
<organism>
    <name type="scientific">Xylella fastidiosa (strain Temecula1 / ATCC 700964)</name>
    <dbReference type="NCBI Taxonomy" id="183190"/>
    <lineage>
        <taxon>Bacteria</taxon>
        <taxon>Pseudomonadati</taxon>
        <taxon>Pseudomonadota</taxon>
        <taxon>Gammaproteobacteria</taxon>
        <taxon>Lysobacterales</taxon>
        <taxon>Lysobacteraceae</taxon>
        <taxon>Xylella</taxon>
    </lineage>
</organism>
<gene>
    <name evidence="1" type="primary">hisF</name>
    <name type="ordered locus">PD_1262</name>
</gene>
<comment type="function">
    <text evidence="1">IGPS catalyzes the conversion of PRFAR and glutamine to IGP, AICAR and glutamate. The HisF subunit catalyzes the cyclization activity that produces IGP and AICAR from PRFAR using the ammonia provided by the HisH subunit.</text>
</comment>
<comment type="catalytic activity">
    <reaction evidence="1">
        <text>5-[(5-phospho-1-deoxy-D-ribulos-1-ylimino)methylamino]-1-(5-phospho-beta-D-ribosyl)imidazole-4-carboxamide + L-glutamine = D-erythro-1-(imidazol-4-yl)glycerol 3-phosphate + 5-amino-1-(5-phospho-beta-D-ribosyl)imidazole-4-carboxamide + L-glutamate + H(+)</text>
        <dbReference type="Rhea" id="RHEA:24793"/>
        <dbReference type="ChEBI" id="CHEBI:15378"/>
        <dbReference type="ChEBI" id="CHEBI:29985"/>
        <dbReference type="ChEBI" id="CHEBI:58278"/>
        <dbReference type="ChEBI" id="CHEBI:58359"/>
        <dbReference type="ChEBI" id="CHEBI:58475"/>
        <dbReference type="ChEBI" id="CHEBI:58525"/>
        <dbReference type="EC" id="4.3.2.10"/>
    </reaction>
</comment>
<comment type="pathway">
    <text evidence="1">Amino-acid biosynthesis; L-histidine biosynthesis; L-histidine from 5-phospho-alpha-D-ribose 1-diphosphate: step 5/9.</text>
</comment>
<comment type="subunit">
    <text evidence="1">Heterodimer of HisH and HisF.</text>
</comment>
<comment type="subcellular location">
    <subcellularLocation>
        <location evidence="1">Cytoplasm</location>
    </subcellularLocation>
</comment>
<comment type="similarity">
    <text evidence="1">Belongs to the HisA/HisF family.</text>
</comment>
<protein>
    <recommendedName>
        <fullName evidence="1">Imidazole glycerol phosphate synthase subunit HisF</fullName>
        <ecNumber evidence="1">4.3.2.10</ecNumber>
    </recommendedName>
    <alternativeName>
        <fullName evidence="1">IGP synthase cyclase subunit</fullName>
    </alternativeName>
    <alternativeName>
        <fullName evidence="1">IGP synthase subunit HisF</fullName>
    </alternativeName>
    <alternativeName>
        <fullName evidence="1">ImGP synthase subunit HisF</fullName>
        <shortName evidence="1">IGPS subunit HisF</shortName>
    </alternativeName>
</protein>
<name>HIS6_XYLFT</name>
<keyword id="KW-0028">Amino-acid biosynthesis</keyword>
<keyword id="KW-0963">Cytoplasm</keyword>
<keyword id="KW-0368">Histidine biosynthesis</keyword>
<keyword id="KW-0456">Lyase</keyword>
<keyword id="KW-1185">Reference proteome</keyword>
<evidence type="ECO:0000255" key="1">
    <source>
        <dbReference type="HAMAP-Rule" id="MF_01013"/>
    </source>
</evidence>
<accession>Q87C34</accession>
<dbReference type="EC" id="4.3.2.10" evidence="1"/>
<dbReference type="EMBL" id="AE009442">
    <property type="protein sequence ID" value="AAO29111.1"/>
    <property type="molecule type" value="Genomic_DNA"/>
</dbReference>
<dbReference type="RefSeq" id="WP_004088319.1">
    <property type="nucleotide sequence ID" value="NC_004556.1"/>
</dbReference>
<dbReference type="SMR" id="Q87C34"/>
<dbReference type="GeneID" id="93905073"/>
<dbReference type="KEGG" id="xft:PD_1262"/>
<dbReference type="HOGENOM" id="CLU_048577_4_0_6"/>
<dbReference type="UniPathway" id="UPA00031">
    <property type="reaction ID" value="UER00010"/>
</dbReference>
<dbReference type="Proteomes" id="UP000002516">
    <property type="component" value="Chromosome"/>
</dbReference>
<dbReference type="GO" id="GO:0005737">
    <property type="term" value="C:cytoplasm"/>
    <property type="evidence" value="ECO:0007669"/>
    <property type="project" value="UniProtKB-SubCell"/>
</dbReference>
<dbReference type="GO" id="GO:0000107">
    <property type="term" value="F:imidazoleglycerol-phosphate synthase activity"/>
    <property type="evidence" value="ECO:0007669"/>
    <property type="project" value="UniProtKB-UniRule"/>
</dbReference>
<dbReference type="GO" id="GO:0016829">
    <property type="term" value="F:lyase activity"/>
    <property type="evidence" value="ECO:0007669"/>
    <property type="project" value="UniProtKB-KW"/>
</dbReference>
<dbReference type="GO" id="GO:0000105">
    <property type="term" value="P:L-histidine biosynthetic process"/>
    <property type="evidence" value="ECO:0007669"/>
    <property type="project" value="UniProtKB-UniRule"/>
</dbReference>
<dbReference type="CDD" id="cd04731">
    <property type="entry name" value="HisF"/>
    <property type="match status" value="1"/>
</dbReference>
<dbReference type="FunFam" id="3.20.20.70:FF:000006">
    <property type="entry name" value="Imidazole glycerol phosphate synthase subunit HisF"/>
    <property type="match status" value="1"/>
</dbReference>
<dbReference type="Gene3D" id="3.20.20.70">
    <property type="entry name" value="Aldolase class I"/>
    <property type="match status" value="1"/>
</dbReference>
<dbReference type="HAMAP" id="MF_01013">
    <property type="entry name" value="HisF"/>
    <property type="match status" value="1"/>
</dbReference>
<dbReference type="InterPro" id="IPR013785">
    <property type="entry name" value="Aldolase_TIM"/>
</dbReference>
<dbReference type="InterPro" id="IPR006062">
    <property type="entry name" value="His_biosynth"/>
</dbReference>
<dbReference type="InterPro" id="IPR004651">
    <property type="entry name" value="HisF"/>
</dbReference>
<dbReference type="InterPro" id="IPR050064">
    <property type="entry name" value="IGPS_HisA/HisF"/>
</dbReference>
<dbReference type="InterPro" id="IPR011060">
    <property type="entry name" value="RibuloseP-bd_barrel"/>
</dbReference>
<dbReference type="NCBIfam" id="TIGR00735">
    <property type="entry name" value="hisF"/>
    <property type="match status" value="1"/>
</dbReference>
<dbReference type="PANTHER" id="PTHR21235:SF2">
    <property type="entry name" value="IMIDAZOLE GLYCEROL PHOSPHATE SYNTHASE HISHF"/>
    <property type="match status" value="1"/>
</dbReference>
<dbReference type="PANTHER" id="PTHR21235">
    <property type="entry name" value="IMIDAZOLE GLYCEROL PHOSPHATE SYNTHASE SUBUNIT HISF/H IGP SYNTHASE SUBUNIT HISF/H"/>
    <property type="match status" value="1"/>
</dbReference>
<dbReference type="Pfam" id="PF00977">
    <property type="entry name" value="His_biosynth"/>
    <property type="match status" value="1"/>
</dbReference>
<dbReference type="SUPFAM" id="SSF51366">
    <property type="entry name" value="Ribulose-phoshate binding barrel"/>
    <property type="match status" value="1"/>
</dbReference>
<feature type="chain" id="PRO_0000142271" description="Imidazole glycerol phosphate synthase subunit HisF">
    <location>
        <begin position="1"/>
        <end position="257"/>
    </location>
</feature>
<feature type="active site" evidence="1">
    <location>
        <position position="11"/>
    </location>
</feature>
<feature type="active site" evidence="1">
    <location>
        <position position="130"/>
    </location>
</feature>